<name>EMBC_MYCTO</name>
<feature type="chain" id="PRO_0000427106" description="Probable arabinosyltransferase C">
    <location>
        <begin position="1"/>
        <end position="1094"/>
    </location>
</feature>
<feature type="transmembrane region" description="Helical" evidence="2">
    <location>
        <begin position="28"/>
        <end position="50"/>
    </location>
</feature>
<feature type="transmembrane region" description="Helical" evidence="2">
    <location>
        <begin position="232"/>
        <end position="251"/>
    </location>
</feature>
<feature type="transmembrane region" description="Helical" evidence="2">
    <location>
        <begin position="264"/>
        <end position="286"/>
    </location>
</feature>
<feature type="transmembrane region" description="Helical" evidence="2">
    <location>
        <begin position="341"/>
        <end position="360"/>
    </location>
</feature>
<feature type="transmembrane region" description="Helical" evidence="2">
    <location>
        <begin position="373"/>
        <end position="392"/>
    </location>
</feature>
<feature type="transmembrane region" description="Helical" evidence="2">
    <location>
        <begin position="431"/>
        <end position="453"/>
    </location>
</feature>
<feature type="transmembrane region" description="Helical" evidence="2">
    <location>
        <begin position="466"/>
        <end position="488"/>
    </location>
</feature>
<feature type="transmembrane region" description="Helical" evidence="2">
    <location>
        <begin position="530"/>
        <end position="552"/>
    </location>
</feature>
<feature type="transmembrane region" description="Helical" evidence="2">
    <location>
        <begin position="565"/>
        <end position="582"/>
    </location>
</feature>
<feature type="transmembrane region" description="Helical" evidence="2">
    <location>
        <begin position="586"/>
        <end position="608"/>
    </location>
</feature>
<feature type="transmembrane region" description="Helical" evidence="2">
    <location>
        <begin position="620"/>
        <end position="642"/>
    </location>
</feature>
<feature type="transmembrane region" description="Helical" evidence="2">
    <location>
        <begin position="657"/>
        <end position="679"/>
    </location>
</feature>
<feature type="transmembrane region" description="Helical" evidence="2">
    <location>
        <begin position="700"/>
        <end position="722"/>
    </location>
</feature>
<feature type="region of interest" description="Disordered" evidence="3">
    <location>
        <begin position="817"/>
        <end position="836"/>
    </location>
</feature>
<feature type="compositionally biased region" description="Low complexity" evidence="3">
    <location>
        <begin position="817"/>
        <end position="831"/>
    </location>
</feature>
<accession>P9WNL4</accession>
<accession>L0TF98</accession>
<accession>O08116</accession>
<accession>P72059</accession>
<keyword id="KW-0046">Antibiotic resistance</keyword>
<keyword id="KW-1003">Cell membrane</keyword>
<keyword id="KW-0961">Cell wall biogenesis/degradation</keyword>
<keyword id="KW-0328">Glycosyltransferase</keyword>
<keyword id="KW-0472">Membrane</keyword>
<keyword id="KW-1185">Reference proteome</keyword>
<keyword id="KW-0808">Transferase</keyword>
<keyword id="KW-0812">Transmembrane</keyword>
<keyword id="KW-1133">Transmembrane helix</keyword>
<comment type="function">
    <text evidence="1">Arabinosyl transferase responsible for the polymerization of arabinose into the arabinan of arabinogalactan.</text>
</comment>
<comment type="subcellular location">
    <subcellularLocation>
        <location evidence="1">Cell membrane</location>
        <topology evidence="1">Multi-pass membrane protein</topology>
    </subcellularLocation>
</comment>
<comment type="similarity">
    <text evidence="4">Belongs to the emb family.</text>
</comment>
<reference key="1">
    <citation type="journal article" date="2002" name="J. Bacteriol.">
        <title>Whole-genome comparison of Mycobacterium tuberculosis clinical and laboratory strains.</title>
        <authorList>
            <person name="Fleischmann R.D."/>
            <person name="Alland D."/>
            <person name="Eisen J.A."/>
            <person name="Carpenter L."/>
            <person name="White O."/>
            <person name="Peterson J.D."/>
            <person name="DeBoy R.T."/>
            <person name="Dodson R.J."/>
            <person name="Gwinn M.L."/>
            <person name="Haft D.H."/>
            <person name="Hickey E.K."/>
            <person name="Kolonay J.F."/>
            <person name="Nelson W.C."/>
            <person name="Umayam L.A."/>
            <person name="Ermolaeva M.D."/>
            <person name="Salzberg S.L."/>
            <person name="Delcher A."/>
            <person name="Utterback T.R."/>
            <person name="Weidman J.F."/>
            <person name="Khouri H.M."/>
            <person name="Gill J."/>
            <person name="Mikula A."/>
            <person name="Bishai W."/>
            <person name="Jacobs W.R. Jr."/>
            <person name="Venter J.C."/>
            <person name="Fraser C.M."/>
        </authorList>
    </citation>
    <scope>NUCLEOTIDE SEQUENCE [LARGE SCALE GENOMIC DNA]</scope>
    <source>
        <strain>CDC 1551 / Oshkosh</strain>
    </source>
</reference>
<dbReference type="EC" id="2.4.2.-"/>
<dbReference type="EMBL" id="AE000516">
    <property type="protein sequence ID" value="AAK48266.1"/>
    <property type="molecule type" value="Genomic_DNA"/>
</dbReference>
<dbReference type="PIR" id="E70697">
    <property type="entry name" value="E70697"/>
</dbReference>
<dbReference type="RefSeq" id="WP_003917841.1">
    <property type="nucleotide sequence ID" value="NZ_KK341227.1"/>
</dbReference>
<dbReference type="RefSeq" id="WP_010924718.1">
    <property type="nucleotide sequence ID" value="NC_002755.2"/>
</dbReference>
<dbReference type="SMR" id="P9WNL4"/>
<dbReference type="CAZy" id="GT53">
    <property type="family name" value="Glycosyltransferase Family 53"/>
</dbReference>
<dbReference type="KEGG" id="mtc:MT3900"/>
<dbReference type="PATRIC" id="fig|83331.31.peg.4197"/>
<dbReference type="HOGENOM" id="CLU_010182_0_0_11"/>
<dbReference type="Proteomes" id="UP000001020">
    <property type="component" value="Chromosome"/>
</dbReference>
<dbReference type="GO" id="GO:0005886">
    <property type="term" value="C:plasma membrane"/>
    <property type="evidence" value="ECO:0007669"/>
    <property type="project" value="UniProtKB-SubCell"/>
</dbReference>
<dbReference type="GO" id="GO:0052636">
    <property type="term" value="F:arabinosyltransferase activity"/>
    <property type="evidence" value="ECO:0007669"/>
    <property type="project" value="InterPro"/>
</dbReference>
<dbReference type="GO" id="GO:0071766">
    <property type="term" value="P:Actinobacterium-type cell wall biogenesis"/>
    <property type="evidence" value="ECO:0007669"/>
    <property type="project" value="InterPro"/>
</dbReference>
<dbReference type="GO" id="GO:0071555">
    <property type="term" value="P:cell wall organization"/>
    <property type="evidence" value="ECO:0007669"/>
    <property type="project" value="UniProtKB-KW"/>
</dbReference>
<dbReference type="GO" id="GO:0046677">
    <property type="term" value="P:response to antibiotic"/>
    <property type="evidence" value="ECO:0007669"/>
    <property type="project" value="UniProtKB-KW"/>
</dbReference>
<dbReference type="FunFam" id="2.60.120.610:FF:000001">
    <property type="entry name" value="Probable arabinosyltransferase C"/>
    <property type="match status" value="1"/>
</dbReference>
<dbReference type="Gene3D" id="3.40.190.160">
    <property type="match status" value="1"/>
</dbReference>
<dbReference type="Gene3D" id="2.60.120.610">
    <property type="entry name" value="arabinofuranosyltransferase like domain"/>
    <property type="match status" value="1"/>
</dbReference>
<dbReference type="Gene3D" id="2.60.120.940">
    <property type="entry name" value="EmbC, C-terminal domain, subdomain 2"/>
    <property type="match status" value="1"/>
</dbReference>
<dbReference type="InterPro" id="IPR032731">
    <property type="entry name" value="Arabino_trans_C"/>
</dbReference>
<dbReference type="InterPro" id="IPR042486">
    <property type="entry name" value="Arabino_trans_C_2"/>
</dbReference>
<dbReference type="InterPro" id="IPR007680">
    <property type="entry name" value="Arabino_trans_central"/>
</dbReference>
<dbReference type="InterPro" id="IPR040920">
    <property type="entry name" value="Arabino_trans_N"/>
</dbReference>
<dbReference type="InterPro" id="IPR027451">
    <property type="entry name" value="EmbABC_dom1"/>
</dbReference>
<dbReference type="Pfam" id="PF14896">
    <property type="entry name" value="Arabino_trans_C"/>
    <property type="match status" value="1"/>
</dbReference>
<dbReference type="Pfam" id="PF17689">
    <property type="entry name" value="Arabino_trans_N"/>
    <property type="match status" value="1"/>
</dbReference>
<dbReference type="Pfam" id="PF04602">
    <property type="entry name" value="Arabinose_trans"/>
    <property type="match status" value="1"/>
</dbReference>
<gene>
    <name type="primary">embC</name>
    <name type="ordered locus">MT3900</name>
</gene>
<organism>
    <name type="scientific">Mycobacterium tuberculosis (strain CDC 1551 / Oshkosh)</name>
    <dbReference type="NCBI Taxonomy" id="83331"/>
    <lineage>
        <taxon>Bacteria</taxon>
        <taxon>Bacillati</taxon>
        <taxon>Actinomycetota</taxon>
        <taxon>Actinomycetes</taxon>
        <taxon>Mycobacteriales</taxon>
        <taxon>Mycobacteriaceae</taxon>
        <taxon>Mycobacterium</taxon>
        <taxon>Mycobacterium tuberculosis complex</taxon>
    </lineage>
</organism>
<evidence type="ECO:0000250" key="1"/>
<evidence type="ECO:0000255" key="2"/>
<evidence type="ECO:0000256" key="3">
    <source>
        <dbReference type="SAM" id="MobiDB-lite"/>
    </source>
</evidence>
<evidence type="ECO:0000305" key="4"/>
<proteinExistence type="inferred from homology"/>
<protein>
    <recommendedName>
        <fullName>Probable arabinosyltransferase C</fullName>
        <ecNumber>2.4.2.-</ecNumber>
    </recommendedName>
</protein>
<sequence>MATEAAPPRIAVRLPSTSVRDAGANYRIARYVAVVAGLLGAVLAIATPLLPVNQTTAQLNWPQNGTFASVEAPLIGYVATDLNITVPCQAAAGLAGSQNTGKTVLLSTVPKQAPKAVDRGLLLQRANDDLVLVVRNVPLVTAPLSQVLGPTCQRLTFTAHADRVAAEFVGLVQGPNAEHPGAPLRGERSGYDFRPQIVGVFTDLAGPAPPGLSFSASVDTRYSSSPTPLKMAAMILGVALTGAALVALHILDTADGMRHRRFLPARWWSTGGLDTLVIAVLVWWHFVGANTSDDGYILTMARVSEHAGYMANYYRWFGTPEAPFGWYYDLLALWAHVSTASIWMRLPTLAMALTCWWVISREVIPRLGHAVKTSRAAAWTAAGMFLAVWLPLDNGLRPEPIIALGILLTWCSVERAVATSRLLPVAIACIIGALTLFSGPTGIASIGALLVAIGPLRTILHRRSRRFGVLPLVAPILAAATVTAIPIFRDQTFAGEIQANLLKRAVGPSLKWFDEHIRYERLFMASPDGSIARRFAVLALVLALAVSVAMSLRKGRIPGTAAGPSRRIIGITIISFLAMMFTPTKWTHHFGVFAGLAGSLGALAAVAVTGAAMRSRRNRTVFAAVVVFVLALSFASVNGWWYVSNFGVPWSNSFPKWRWSLTTALLELTVLVLLLAAWFHFVANGDGRRTARPTRFRARLAGIVQSPLAIATWLLVLFEVVSLTQAMISQYPAWSVGRSNLQALAGKTCGLAEDVLVELDPNAGMLAPVTAPLADALGAGLSEAFTPNGIPADVTADPVMERPGDRSFLNDDGLITGSEPGTEGGTTAAPGINGSRARLPYNLDPARTPVLGSWRAGVQVPAMLRSGWYRLPTNEQRDRAPLLVVTAAGRFDSREVRLQWATDEQAAAGHHGGSMEFADVGAAPAWRNLRAPLSAIPSTATQVRLVADDQDLAPQHWIALTPPRIPRVRTLQNVVGAADPLFLDWLVGLAFPCQRPFGHQYGVDETPKWRILPDRFGAEANSPVMDHNGGGPLGITELLMRATTVASYLKDDWFRDWGALQRLTPYYPDAQPADLNLGTVTRSGLWSPAPLRRG</sequence>